<evidence type="ECO:0000255" key="1">
    <source>
        <dbReference type="HAMAP-Rule" id="MF_00357"/>
    </source>
</evidence>
<evidence type="ECO:0000255" key="2">
    <source>
        <dbReference type="PROSITE-ProRule" id="PRU01261"/>
    </source>
</evidence>
<evidence type="ECO:0000256" key="3">
    <source>
        <dbReference type="SAM" id="MobiDB-lite"/>
    </source>
</evidence>
<organism>
    <name type="scientific">Limosilactobacillus fermentum (strain NBRC 3956 / LMG 18251)</name>
    <name type="common">Lactobacillus fermentum</name>
    <dbReference type="NCBI Taxonomy" id="334390"/>
    <lineage>
        <taxon>Bacteria</taxon>
        <taxon>Bacillati</taxon>
        <taxon>Bacillota</taxon>
        <taxon>Bacilli</taxon>
        <taxon>Lactobacillales</taxon>
        <taxon>Lactobacillaceae</taxon>
        <taxon>Limosilactobacillus</taxon>
    </lineage>
</organism>
<keyword id="KW-0240">DNA-directed RNA polymerase</keyword>
<keyword id="KW-0548">Nucleotidyltransferase</keyword>
<keyword id="KW-1185">Reference proteome</keyword>
<keyword id="KW-0804">Transcription</keyword>
<keyword id="KW-0808">Transferase</keyword>
<dbReference type="EMBL" id="AP008937">
    <property type="protein sequence ID" value="BAG26537.1"/>
    <property type="molecule type" value="Genomic_DNA"/>
</dbReference>
<dbReference type="RefSeq" id="WP_003684002.1">
    <property type="nucleotide sequence ID" value="NC_010610.1"/>
</dbReference>
<dbReference type="SMR" id="B2GA55"/>
<dbReference type="GeneID" id="83715488"/>
<dbReference type="KEGG" id="lfe:LAF_0201"/>
<dbReference type="eggNOG" id="COG3343">
    <property type="taxonomic scope" value="Bacteria"/>
</dbReference>
<dbReference type="HOGENOM" id="CLU_116648_0_0_9"/>
<dbReference type="Proteomes" id="UP000001697">
    <property type="component" value="Chromosome"/>
</dbReference>
<dbReference type="GO" id="GO:0000428">
    <property type="term" value="C:DNA-directed RNA polymerase complex"/>
    <property type="evidence" value="ECO:0007669"/>
    <property type="project" value="UniProtKB-KW"/>
</dbReference>
<dbReference type="GO" id="GO:0003899">
    <property type="term" value="F:DNA-directed RNA polymerase activity"/>
    <property type="evidence" value="ECO:0007669"/>
    <property type="project" value="UniProtKB-UniRule"/>
</dbReference>
<dbReference type="GO" id="GO:0006351">
    <property type="term" value="P:DNA-templated transcription"/>
    <property type="evidence" value="ECO:0007669"/>
    <property type="project" value="InterPro"/>
</dbReference>
<dbReference type="GO" id="GO:0006355">
    <property type="term" value="P:regulation of DNA-templated transcription"/>
    <property type="evidence" value="ECO:0007669"/>
    <property type="project" value="UniProtKB-UniRule"/>
</dbReference>
<dbReference type="Gene3D" id="1.10.10.1250">
    <property type="entry name" value="RNA polymerase, subunit delta, N-terminal domain"/>
    <property type="match status" value="1"/>
</dbReference>
<dbReference type="HAMAP" id="MF_00357">
    <property type="entry name" value="RNApol_bact_RpoE"/>
    <property type="match status" value="1"/>
</dbReference>
<dbReference type="InterPro" id="IPR007759">
    <property type="entry name" value="Asxl_HARE-HTH"/>
</dbReference>
<dbReference type="InterPro" id="IPR038087">
    <property type="entry name" value="RNAP_delta_N_dom_sf"/>
</dbReference>
<dbReference type="InterPro" id="IPR029757">
    <property type="entry name" value="RpoE"/>
</dbReference>
<dbReference type="NCBIfam" id="TIGR04567">
    <property type="entry name" value="RNAP_delt_lowGC"/>
    <property type="match status" value="1"/>
</dbReference>
<dbReference type="Pfam" id="PF05066">
    <property type="entry name" value="HARE-HTH"/>
    <property type="match status" value="1"/>
</dbReference>
<dbReference type="PROSITE" id="PS51913">
    <property type="entry name" value="HTH_HARE"/>
    <property type="match status" value="1"/>
</dbReference>
<accession>B2GA55</accession>
<name>RPOE_LIMF3</name>
<proteinExistence type="inferred from homology"/>
<feature type="chain" id="PRO_1000120564" description="Probable DNA-directed RNA polymerase subunit delta">
    <location>
        <begin position="1"/>
        <end position="195"/>
    </location>
</feature>
<feature type="domain" description="HTH HARE-type" evidence="2">
    <location>
        <begin position="14"/>
        <end position="81"/>
    </location>
</feature>
<feature type="region of interest" description="Disordered" evidence="3">
    <location>
        <begin position="91"/>
        <end position="195"/>
    </location>
</feature>
<feature type="compositionally biased region" description="Acidic residues" evidence="3">
    <location>
        <begin position="116"/>
        <end position="171"/>
    </location>
</feature>
<feature type="compositionally biased region" description="Acidic residues" evidence="3">
    <location>
        <begin position="179"/>
        <end position="195"/>
    </location>
</feature>
<protein>
    <recommendedName>
        <fullName evidence="1">Probable DNA-directed RNA polymerase subunit delta</fullName>
    </recommendedName>
    <alternativeName>
        <fullName evidence="1">RNAP delta factor</fullName>
    </alternativeName>
</protein>
<reference key="1">
    <citation type="journal article" date="2008" name="DNA Res.">
        <title>Comparative genome analysis of Lactobacillus reuteri and Lactobacillus fermentum reveal a genomic island for reuterin and cobalamin production.</title>
        <authorList>
            <person name="Morita H."/>
            <person name="Toh H."/>
            <person name="Fukuda S."/>
            <person name="Horikawa H."/>
            <person name="Oshima K."/>
            <person name="Suzuki T."/>
            <person name="Murakami M."/>
            <person name="Hisamatsu S."/>
            <person name="Kato Y."/>
            <person name="Takizawa T."/>
            <person name="Fukuoka H."/>
            <person name="Yoshimura T."/>
            <person name="Itoh K."/>
            <person name="O'Sullivan D.J."/>
            <person name="McKay L.L."/>
            <person name="Ohno H."/>
            <person name="Kikuchi J."/>
            <person name="Masaoka T."/>
            <person name="Hattori M."/>
        </authorList>
    </citation>
    <scope>NUCLEOTIDE SEQUENCE [LARGE SCALE GENOMIC DNA]</scope>
    <source>
        <strain>NBRC 3956 / LMG 18251</strain>
    </source>
</reference>
<gene>
    <name evidence="1" type="primary">rpoE</name>
    <name type="ordered locus">LAF_0201</name>
</gene>
<comment type="function">
    <text evidence="1">Participates in both the initiation and recycling phases of transcription. In the presence of the delta subunit, RNAP displays an increased specificity of transcription, a decreased affinity for nucleic acids, and an increased efficiency of RNA synthesis because of enhanced recycling.</text>
</comment>
<comment type="subunit">
    <text evidence="1">RNAP is composed of a core of 2 alpha, a beta and a beta' subunits. The core is associated with a delta subunit and one of several sigma factors.</text>
</comment>
<comment type="similarity">
    <text evidence="1">Belongs to the RpoE family.</text>
</comment>
<sequence>MDLKVFDGQEKSELSMIEVAHAILAYHNEAMAFADLTNEIQQYLGKSDEEIRERLSQFYTDLNVDGSFISLGDNTWGLRAWYPYESIDEATVGETEDEEDRPKKRRRKVNAFLAGTDDDDDVIDYDNDDPEDEDLDDDQGPDDDDDYEEDDYDEDNPVEDDDEETNIEDQLSELHGDEFGDDEEEDEEDKEDDEE</sequence>